<comment type="function">
    <text evidence="1">Participates actively in the response to hyperosmotic and heat shock by preventing the aggregation of stress-denatured proteins and by disaggregating proteins, also in an autonomous, DnaK-independent fashion. Unfolded proteins bind initially to DnaJ; upon interaction with the DnaJ-bound protein, DnaK hydrolyzes its bound ATP, resulting in the formation of a stable complex. GrpE releases ADP from DnaK; ATP binding to DnaK triggers the release of the substrate protein, thus completing the reaction cycle. Several rounds of ATP-dependent interactions between DnaJ, DnaK and GrpE are required for fully efficient folding. Also involved, together with DnaK and GrpE, in the DNA replication of plasmids through activation of initiation proteins.</text>
</comment>
<comment type="cofactor">
    <cofactor evidence="1">
        <name>Zn(2+)</name>
        <dbReference type="ChEBI" id="CHEBI:29105"/>
    </cofactor>
    <text evidence="1">Binds 2 Zn(2+) ions per monomer.</text>
</comment>
<comment type="subunit">
    <text evidence="1">Homodimer.</text>
</comment>
<comment type="subcellular location">
    <subcellularLocation>
        <location evidence="1">Cytoplasm</location>
    </subcellularLocation>
</comment>
<comment type="domain">
    <text evidence="1">The J domain is necessary and sufficient to stimulate DnaK ATPase activity. Zinc center 1 plays an important role in the autonomous, DnaK-independent chaperone activity of DnaJ. Zinc center 2 is essential for interaction with DnaK and for DnaJ activity.</text>
</comment>
<comment type="similarity">
    <text evidence="1">Belongs to the DnaJ family.</text>
</comment>
<reference key="1">
    <citation type="submission" date="2006-08" db="EMBL/GenBank/DDBJ databases">
        <title>Complete sequence of chromosome 1 of Shewanella sp. MR-7.</title>
        <authorList>
            <person name="Copeland A."/>
            <person name="Lucas S."/>
            <person name="Lapidus A."/>
            <person name="Barry K."/>
            <person name="Detter J.C."/>
            <person name="Glavina del Rio T."/>
            <person name="Hammon N."/>
            <person name="Israni S."/>
            <person name="Dalin E."/>
            <person name="Tice H."/>
            <person name="Pitluck S."/>
            <person name="Kiss H."/>
            <person name="Brettin T."/>
            <person name="Bruce D."/>
            <person name="Han C."/>
            <person name="Tapia R."/>
            <person name="Gilna P."/>
            <person name="Schmutz J."/>
            <person name="Larimer F."/>
            <person name="Land M."/>
            <person name="Hauser L."/>
            <person name="Kyrpides N."/>
            <person name="Mikhailova N."/>
            <person name="Nealson K."/>
            <person name="Konstantinidis K."/>
            <person name="Klappenbach J."/>
            <person name="Tiedje J."/>
            <person name="Richardson P."/>
        </authorList>
    </citation>
    <scope>NUCLEOTIDE SEQUENCE [LARGE SCALE GENOMIC DNA]</scope>
    <source>
        <strain>MR-7</strain>
    </source>
</reference>
<protein>
    <recommendedName>
        <fullName evidence="1">Chaperone protein DnaJ</fullName>
    </recommendedName>
</protein>
<feature type="chain" id="PRO_1000085299" description="Chaperone protein DnaJ">
    <location>
        <begin position="1"/>
        <end position="377"/>
    </location>
</feature>
<feature type="domain" description="J" evidence="1">
    <location>
        <begin position="5"/>
        <end position="70"/>
    </location>
</feature>
<feature type="repeat" description="CXXCXGXG motif">
    <location>
        <begin position="146"/>
        <end position="153"/>
    </location>
</feature>
<feature type="repeat" description="CXXCXGXG motif">
    <location>
        <begin position="163"/>
        <end position="170"/>
    </location>
</feature>
<feature type="repeat" description="CXXCXGXG motif">
    <location>
        <begin position="185"/>
        <end position="192"/>
    </location>
</feature>
<feature type="repeat" description="CXXCXGXG motif">
    <location>
        <begin position="199"/>
        <end position="206"/>
    </location>
</feature>
<feature type="zinc finger region" description="CR-type" evidence="1">
    <location>
        <begin position="133"/>
        <end position="211"/>
    </location>
</feature>
<feature type="binding site" evidence="1">
    <location>
        <position position="146"/>
    </location>
    <ligand>
        <name>Zn(2+)</name>
        <dbReference type="ChEBI" id="CHEBI:29105"/>
        <label>1</label>
    </ligand>
</feature>
<feature type="binding site" evidence="1">
    <location>
        <position position="149"/>
    </location>
    <ligand>
        <name>Zn(2+)</name>
        <dbReference type="ChEBI" id="CHEBI:29105"/>
        <label>1</label>
    </ligand>
</feature>
<feature type="binding site" evidence="1">
    <location>
        <position position="163"/>
    </location>
    <ligand>
        <name>Zn(2+)</name>
        <dbReference type="ChEBI" id="CHEBI:29105"/>
        <label>2</label>
    </ligand>
</feature>
<feature type="binding site" evidence="1">
    <location>
        <position position="166"/>
    </location>
    <ligand>
        <name>Zn(2+)</name>
        <dbReference type="ChEBI" id="CHEBI:29105"/>
        <label>2</label>
    </ligand>
</feature>
<feature type="binding site" evidence="1">
    <location>
        <position position="185"/>
    </location>
    <ligand>
        <name>Zn(2+)</name>
        <dbReference type="ChEBI" id="CHEBI:29105"/>
        <label>2</label>
    </ligand>
</feature>
<feature type="binding site" evidence="1">
    <location>
        <position position="188"/>
    </location>
    <ligand>
        <name>Zn(2+)</name>
        <dbReference type="ChEBI" id="CHEBI:29105"/>
        <label>2</label>
    </ligand>
</feature>
<feature type="binding site" evidence="1">
    <location>
        <position position="199"/>
    </location>
    <ligand>
        <name>Zn(2+)</name>
        <dbReference type="ChEBI" id="CHEBI:29105"/>
        <label>1</label>
    </ligand>
</feature>
<feature type="binding site" evidence="1">
    <location>
        <position position="202"/>
    </location>
    <ligand>
        <name>Zn(2+)</name>
        <dbReference type="ChEBI" id="CHEBI:29105"/>
        <label>1</label>
    </ligand>
</feature>
<keyword id="KW-0143">Chaperone</keyword>
<keyword id="KW-0963">Cytoplasm</keyword>
<keyword id="KW-0235">DNA replication</keyword>
<keyword id="KW-0479">Metal-binding</keyword>
<keyword id="KW-0677">Repeat</keyword>
<keyword id="KW-0346">Stress response</keyword>
<keyword id="KW-0862">Zinc</keyword>
<keyword id="KW-0863">Zinc-finger</keyword>
<dbReference type="EMBL" id="CP000444">
    <property type="protein sequence ID" value="ABI41995.1"/>
    <property type="molecule type" value="Genomic_DNA"/>
</dbReference>
<dbReference type="SMR" id="Q0HY10"/>
<dbReference type="KEGG" id="shm:Shewmr7_0996"/>
<dbReference type="HOGENOM" id="CLU_017633_0_7_6"/>
<dbReference type="GO" id="GO:0005737">
    <property type="term" value="C:cytoplasm"/>
    <property type="evidence" value="ECO:0007669"/>
    <property type="project" value="UniProtKB-SubCell"/>
</dbReference>
<dbReference type="GO" id="GO:0005524">
    <property type="term" value="F:ATP binding"/>
    <property type="evidence" value="ECO:0007669"/>
    <property type="project" value="InterPro"/>
</dbReference>
<dbReference type="GO" id="GO:0031072">
    <property type="term" value="F:heat shock protein binding"/>
    <property type="evidence" value="ECO:0007669"/>
    <property type="project" value="InterPro"/>
</dbReference>
<dbReference type="GO" id="GO:0051082">
    <property type="term" value="F:unfolded protein binding"/>
    <property type="evidence" value="ECO:0007669"/>
    <property type="project" value="UniProtKB-UniRule"/>
</dbReference>
<dbReference type="GO" id="GO:0008270">
    <property type="term" value="F:zinc ion binding"/>
    <property type="evidence" value="ECO:0007669"/>
    <property type="project" value="UniProtKB-UniRule"/>
</dbReference>
<dbReference type="GO" id="GO:0051085">
    <property type="term" value="P:chaperone cofactor-dependent protein refolding"/>
    <property type="evidence" value="ECO:0007669"/>
    <property type="project" value="TreeGrafter"/>
</dbReference>
<dbReference type="GO" id="GO:0006260">
    <property type="term" value="P:DNA replication"/>
    <property type="evidence" value="ECO:0007669"/>
    <property type="project" value="UniProtKB-KW"/>
</dbReference>
<dbReference type="GO" id="GO:0042026">
    <property type="term" value="P:protein refolding"/>
    <property type="evidence" value="ECO:0007669"/>
    <property type="project" value="TreeGrafter"/>
</dbReference>
<dbReference type="GO" id="GO:0009408">
    <property type="term" value="P:response to heat"/>
    <property type="evidence" value="ECO:0007669"/>
    <property type="project" value="InterPro"/>
</dbReference>
<dbReference type="CDD" id="cd06257">
    <property type="entry name" value="DnaJ"/>
    <property type="match status" value="1"/>
</dbReference>
<dbReference type="CDD" id="cd10747">
    <property type="entry name" value="DnaJ_C"/>
    <property type="match status" value="1"/>
</dbReference>
<dbReference type="CDD" id="cd10719">
    <property type="entry name" value="DnaJ_zf"/>
    <property type="match status" value="1"/>
</dbReference>
<dbReference type="FunFam" id="1.10.287.110:FF:000003">
    <property type="entry name" value="Molecular chaperone DnaJ"/>
    <property type="match status" value="1"/>
</dbReference>
<dbReference type="FunFam" id="2.10.230.10:FF:000002">
    <property type="entry name" value="Molecular chaperone DnaJ"/>
    <property type="match status" value="1"/>
</dbReference>
<dbReference type="FunFam" id="2.60.260.20:FF:000004">
    <property type="entry name" value="Molecular chaperone DnaJ"/>
    <property type="match status" value="1"/>
</dbReference>
<dbReference type="Gene3D" id="1.10.287.110">
    <property type="entry name" value="DnaJ domain"/>
    <property type="match status" value="1"/>
</dbReference>
<dbReference type="Gene3D" id="2.10.230.10">
    <property type="entry name" value="Heat shock protein DnaJ, cysteine-rich domain"/>
    <property type="match status" value="1"/>
</dbReference>
<dbReference type="Gene3D" id="2.60.260.20">
    <property type="entry name" value="Urease metallochaperone UreE, N-terminal domain"/>
    <property type="match status" value="2"/>
</dbReference>
<dbReference type="HAMAP" id="MF_01152">
    <property type="entry name" value="DnaJ"/>
    <property type="match status" value="1"/>
</dbReference>
<dbReference type="InterPro" id="IPR012724">
    <property type="entry name" value="DnaJ"/>
</dbReference>
<dbReference type="InterPro" id="IPR002939">
    <property type="entry name" value="DnaJ_C"/>
</dbReference>
<dbReference type="InterPro" id="IPR001623">
    <property type="entry name" value="DnaJ_domain"/>
</dbReference>
<dbReference type="InterPro" id="IPR018253">
    <property type="entry name" value="DnaJ_domain_CS"/>
</dbReference>
<dbReference type="InterPro" id="IPR008971">
    <property type="entry name" value="HSP40/DnaJ_pept-bd"/>
</dbReference>
<dbReference type="InterPro" id="IPR001305">
    <property type="entry name" value="HSP_DnaJ_Cys-rich_dom"/>
</dbReference>
<dbReference type="InterPro" id="IPR036410">
    <property type="entry name" value="HSP_DnaJ_Cys-rich_dom_sf"/>
</dbReference>
<dbReference type="InterPro" id="IPR036869">
    <property type="entry name" value="J_dom_sf"/>
</dbReference>
<dbReference type="NCBIfam" id="TIGR02349">
    <property type="entry name" value="DnaJ_bact"/>
    <property type="match status" value="1"/>
</dbReference>
<dbReference type="NCBIfam" id="NF008035">
    <property type="entry name" value="PRK10767.1"/>
    <property type="match status" value="1"/>
</dbReference>
<dbReference type="PANTHER" id="PTHR43096:SF48">
    <property type="entry name" value="CHAPERONE PROTEIN DNAJ"/>
    <property type="match status" value="1"/>
</dbReference>
<dbReference type="PANTHER" id="PTHR43096">
    <property type="entry name" value="DNAJ HOMOLOG 1, MITOCHONDRIAL-RELATED"/>
    <property type="match status" value="1"/>
</dbReference>
<dbReference type="Pfam" id="PF00226">
    <property type="entry name" value="DnaJ"/>
    <property type="match status" value="1"/>
</dbReference>
<dbReference type="Pfam" id="PF01556">
    <property type="entry name" value="DnaJ_C"/>
    <property type="match status" value="1"/>
</dbReference>
<dbReference type="Pfam" id="PF00684">
    <property type="entry name" value="DnaJ_CXXCXGXG"/>
    <property type="match status" value="1"/>
</dbReference>
<dbReference type="PRINTS" id="PR00625">
    <property type="entry name" value="JDOMAIN"/>
</dbReference>
<dbReference type="SMART" id="SM00271">
    <property type="entry name" value="DnaJ"/>
    <property type="match status" value="1"/>
</dbReference>
<dbReference type="SUPFAM" id="SSF46565">
    <property type="entry name" value="Chaperone J-domain"/>
    <property type="match status" value="1"/>
</dbReference>
<dbReference type="SUPFAM" id="SSF57938">
    <property type="entry name" value="DnaJ/Hsp40 cysteine-rich domain"/>
    <property type="match status" value="1"/>
</dbReference>
<dbReference type="SUPFAM" id="SSF49493">
    <property type="entry name" value="HSP40/DnaJ peptide-binding domain"/>
    <property type="match status" value="2"/>
</dbReference>
<dbReference type="PROSITE" id="PS00636">
    <property type="entry name" value="DNAJ_1"/>
    <property type="match status" value="1"/>
</dbReference>
<dbReference type="PROSITE" id="PS50076">
    <property type="entry name" value="DNAJ_2"/>
    <property type="match status" value="1"/>
</dbReference>
<dbReference type="PROSITE" id="PS51188">
    <property type="entry name" value="ZF_CR"/>
    <property type="match status" value="1"/>
</dbReference>
<evidence type="ECO:0000255" key="1">
    <source>
        <dbReference type="HAMAP-Rule" id="MF_01152"/>
    </source>
</evidence>
<accession>Q0HY10</accession>
<sequence>MSKRDYYEVLGVGRDASEREIKKAYKRLAMKFHPDRNPGDKAAEASFKEVKEAYEILTDANKKAAYDQFGHAGVDPNRGGGGGYGGAGDFGDIFGDVFGDIFGGGRRGGQRQAARGSDLRYNLELSLEEAVKGLTKELRIPTLASCDVCDGSGAKKGTSATTCGTCHGQGQVQMRQGFFTVQQACPTCHGRGKIIKDPCTKCHGDGRVEKTKTLSVKIPAGVDTGDRIRLAGEGEAGEFGAPPGDLYVQVTVREHAIFVRDGNNLYCEVPISFSKAALGGEIEVPTLDGKVSLKIPAETQTGRMFRLRGKGVKSVRSHAVGDLLCKVVMETPVNLNERQKELLREFEATLTGESKKHSPKAEGFFDGVKKFFQDLNS</sequence>
<organism>
    <name type="scientific">Shewanella sp. (strain MR-7)</name>
    <dbReference type="NCBI Taxonomy" id="60481"/>
    <lineage>
        <taxon>Bacteria</taxon>
        <taxon>Pseudomonadati</taxon>
        <taxon>Pseudomonadota</taxon>
        <taxon>Gammaproteobacteria</taxon>
        <taxon>Alteromonadales</taxon>
        <taxon>Shewanellaceae</taxon>
        <taxon>Shewanella</taxon>
    </lineage>
</organism>
<name>DNAJ_SHESR</name>
<proteinExistence type="inferred from homology"/>
<gene>
    <name evidence="1" type="primary">dnaJ</name>
    <name type="ordered locus">Shewmr7_0996</name>
</gene>